<organism>
    <name type="scientific">Burkholderia orbicola (strain AU 1054)</name>
    <dbReference type="NCBI Taxonomy" id="331271"/>
    <lineage>
        <taxon>Bacteria</taxon>
        <taxon>Pseudomonadati</taxon>
        <taxon>Pseudomonadota</taxon>
        <taxon>Betaproteobacteria</taxon>
        <taxon>Burkholderiales</taxon>
        <taxon>Burkholderiaceae</taxon>
        <taxon>Burkholderia</taxon>
        <taxon>Burkholderia cepacia complex</taxon>
        <taxon>Burkholderia orbicola</taxon>
    </lineage>
</organism>
<accession>Q1BRX1</accession>
<reference key="1">
    <citation type="submission" date="2006-05" db="EMBL/GenBank/DDBJ databases">
        <title>Complete sequence of chromosome 1 of Burkholderia cenocepacia AU 1054.</title>
        <authorList>
            <consortium name="US DOE Joint Genome Institute"/>
            <person name="Copeland A."/>
            <person name="Lucas S."/>
            <person name="Lapidus A."/>
            <person name="Barry K."/>
            <person name="Detter J.C."/>
            <person name="Glavina del Rio T."/>
            <person name="Hammon N."/>
            <person name="Israni S."/>
            <person name="Dalin E."/>
            <person name="Tice H."/>
            <person name="Pitluck S."/>
            <person name="Chain P."/>
            <person name="Malfatti S."/>
            <person name="Shin M."/>
            <person name="Vergez L."/>
            <person name="Schmutz J."/>
            <person name="Larimer F."/>
            <person name="Land M."/>
            <person name="Hauser L."/>
            <person name="Kyrpides N."/>
            <person name="Lykidis A."/>
            <person name="LiPuma J.J."/>
            <person name="Konstantinidis K."/>
            <person name="Tiedje J.M."/>
            <person name="Richardson P."/>
        </authorList>
    </citation>
    <scope>NUCLEOTIDE SEQUENCE [LARGE SCALE GENOMIC DNA]</scope>
    <source>
        <strain>AU 1054</strain>
    </source>
</reference>
<dbReference type="EMBL" id="CP000378">
    <property type="protein sequence ID" value="ABF77634.1"/>
    <property type="molecule type" value="Genomic_DNA"/>
</dbReference>
<dbReference type="SMR" id="Q1BRX1"/>
<dbReference type="HOGENOM" id="CLU_103849_1_2_4"/>
<dbReference type="GO" id="GO:0005829">
    <property type="term" value="C:cytosol"/>
    <property type="evidence" value="ECO:0007669"/>
    <property type="project" value="TreeGrafter"/>
</dbReference>
<dbReference type="GO" id="GO:0015935">
    <property type="term" value="C:small ribosomal subunit"/>
    <property type="evidence" value="ECO:0007669"/>
    <property type="project" value="TreeGrafter"/>
</dbReference>
<dbReference type="GO" id="GO:0019843">
    <property type="term" value="F:rRNA binding"/>
    <property type="evidence" value="ECO:0007669"/>
    <property type="project" value="UniProtKB-UniRule"/>
</dbReference>
<dbReference type="GO" id="GO:0003735">
    <property type="term" value="F:structural constituent of ribosome"/>
    <property type="evidence" value="ECO:0007669"/>
    <property type="project" value="InterPro"/>
</dbReference>
<dbReference type="GO" id="GO:0000049">
    <property type="term" value="F:tRNA binding"/>
    <property type="evidence" value="ECO:0007669"/>
    <property type="project" value="UniProtKB-UniRule"/>
</dbReference>
<dbReference type="GO" id="GO:0006412">
    <property type="term" value="P:translation"/>
    <property type="evidence" value="ECO:0007669"/>
    <property type="project" value="UniProtKB-UniRule"/>
</dbReference>
<dbReference type="FunFam" id="1.10.8.50:FF:000001">
    <property type="entry name" value="30S ribosomal protein S13"/>
    <property type="match status" value="1"/>
</dbReference>
<dbReference type="FunFam" id="4.10.910.10:FF:000001">
    <property type="entry name" value="30S ribosomal protein S13"/>
    <property type="match status" value="1"/>
</dbReference>
<dbReference type="Gene3D" id="1.10.8.50">
    <property type="match status" value="1"/>
</dbReference>
<dbReference type="Gene3D" id="4.10.910.10">
    <property type="entry name" value="30s ribosomal protein s13, domain 2"/>
    <property type="match status" value="1"/>
</dbReference>
<dbReference type="HAMAP" id="MF_01315">
    <property type="entry name" value="Ribosomal_uS13"/>
    <property type="match status" value="1"/>
</dbReference>
<dbReference type="InterPro" id="IPR027437">
    <property type="entry name" value="Rbsml_uS13_C"/>
</dbReference>
<dbReference type="InterPro" id="IPR001892">
    <property type="entry name" value="Ribosomal_uS13"/>
</dbReference>
<dbReference type="InterPro" id="IPR010979">
    <property type="entry name" value="Ribosomal_uS13-like_H2TH"/>
</dbReference>
<dbReference type="InterPro" id="IPR019980">
    <property type="entry name" value="Ribosomal_uS13_bac-type"/>
</dbReference>
<dbReference type="InterPro" id="IPR018269">
    <property type="entry name" value="Ribosomal_uS13_CS"/>
</dbReference>
<dbReference type="NCBIfam" id="TIGR03631">
    <property type="entry name" value="uS13_bact"/>
    <property type="match status" value="1"/>
</dbReference>
<dbReference type="PANTHER" id="PTHR10871">
    <property type="entry name" value="30S RIBOSOMAL PROTEIN S13/40S RIBOSOMAL PROTEIN S18"/>
    <property type="match status" value="1"/>
</dbReference>
<dbReference type="PANTHER" id="PTHR10871:SF1">
    <property type="entry name" value="SMALL RIBOSOMAL SUBUNIT PROTEIN US13M"/>
    <property type="match status" value="1"/>
</dbReference>
<dbReference type="Pfam" id="PF00416">
    <property type="entry name" value="Ribosomal_S13"/>
    <property type="match status" value="1"/>
</dbReference>
<dbReference type="PIRSF" id="PIRSF002134">
    <property type="entry name" value="Ribosomal_S13"/>
    <property type="match status" value="1"/>
</dbReference>
<dbReference type="SUPFAM" id="SSF46946">
    <property type="entry name" value="S13-like H2TH domain"/>
    <property type="match status" value="1"/>
</dbReference>
<dbReference type="PROSITE" id="PS00646">
    <property type="entry name" value="RIBOSOMAL_S13_1"/>
    <property type="match status" value="1"/>
</dbReference>
<dbReference type="PROSITE" id="PS50159">
    <property type="entry name" value="RIBOSOMAL_S13_2"/>
    <property type="match status" value="1"/>
</dbReference>
<keyword id="KW-0687">Ribonucleoprotein</keyword>
<keyword id="KW-0689">Ribosomal protein</keyword>
<keyword id="KW-0694">RNA-binding</keyword>
<keyword id="KW-0699">rRNA-binding</keyword>
<keyword id="KW-0820">tRNA-binding</keyword>
<protein>
    <recommendedName>
        <fullName evidence="1">Small ribosomal subunit protein uS13</fullName>
    </recommendedName>
    <alternativeName>
        <fullName evidence="3">30S ribosomal protein S13</fullName>
    </alternativeName>
</protein>
<proteinExistence type="inferred from homology"/>
<sequence length="121" mass="13610">MARIAGVNIPNHQHTEIGLTAIFGVGRTRSRSICVAAGVDFSKKVKDLTDADLEKLREEVGKFVVEGDLRREVTMNIKRLMDLGCYRGVRHRKGLPMRGQRTRTNARTRKGPRRAAQALKK</sequence>
<comment type="function">
    <text evidence="1">Located at the top of the head of the 30S subunit, it contacts several helices of the 16S rRNA. In the 70S ribosome it contacts the 23S rRNA (bridge B1a) and protein L5 of the 50S subunit (bridge B1b), connecting the 2 subunits; these bridges are implicated in subunit movement. Contacts the tRNAs in the A and P-sites.</text>
</comment>
<comment type="subunit">
    <text evidence="1">Part of the 30S ribosomal subunit. Forms a loose heterodimer with protein S19. Forms two bridges to the 50S subunit in the 70S ribosome.</text>
</comment>
<comment type="similarity">
    <text evidence="1">Belongs to the universal ribosomal protein uS13 family.</text>
</comment>
<feature type="chain" id="PRO_0000306575" description="Small ribosomal subunit protein uS13">
    <location>
        <begin position="1"/>
        <end position="121"/>
    </location>
</feature>
<feature type="region of interest" description="Disordered" evidence="2">
    <location>
        <begin position="92"/>
        <end position="121"/>
    </location>
</feature>
<name>RS13_BURO1</name>
<gene>
    <name evidence="1" type="primary">rpsM</name>
    <name type="ordered locus">Bcen_2736</name>
</gene>
<evidence type="ECO:0000255" key="1">
    <source>
        <dbReference type="HAMAP-Rule" id="MF_01315"/>
    </source>
</evidence>
<evidence type="ECO:0000256" key="2">
    <source>
        <dbReference type="SAM" id="MobiDB-lite"/>
    </source>
</evidence>
<evidence type="ECO:0000305" key="3"/>